<name>PDC4_ARATH</name>
<protein>
    <recommendedName>
        <fullName>Pyruvate decarboxylase 4</fullName>
        <shortName>AtPDC4</shortName>
        <ecNumber>4.1.1.1</ecNumber>
    </recommendedName>
</protein>
<keyword id="KW-0210">Decarboxylase</keyword>
<keyword id="KW-0456">Lyase</keyword>
<keyword id="KW-0460">Magnesium</keyword>
<keyword id="KW-0479">Metal-binding</keyword>
<keyword id="KW-0670">Pyruvate</keyword>
<keyword id="KW-1185">Reference proteome</keyword>
<keyword id="KW-0346">Stress response</keyword>
<keyword id="KW-0786">Thiamine pyrophosphate</keyword>
<comment type="catalytic activity">
    <reaction>
        <text>a 2-oxocarboxylate + H(+) = an aldehyde + CO2</text>
        <dbReference type="Rhea" id="RHEA:11628"/>
        <dbReference type="ChEBI" id="CHEBI:15378"/>
        <dbReference type="ChEBI" id="CHEBI:16526"/>
        <dbReference type="ChEBI" id="CHEBI:17478"/>
        <dbReference type="ChEBI" id="CHEBI:35179"/>
        <dbReference type="EC" id="4.1.1.1"/>
    </reaction>
</comment>
<comment type="cofactor">
    <cofactor>
        <name>a metal cation</name>
        <dbReference type="ChEBI" id="CHEBI:25213"/>
    </cofactor>
    <text>Binds 1 metal ion per subunit.</text>
</comment>
<comment type="cofactor">
    <cofactor>
        <name>thiamine diphosphate</name>
        <dbReference type="ChEBI" id="CHEBI:58937"/>
    </cofactor>
    <text>Binds 1 thiamine pyrophosphate per subunit.</text>
</comment>
<comment type="subunit">
    <text evidence="3">Homotetramer.</text>
</comment>
<comment type="tissue specificity">
    <text evidence="2">Expressed in shoots and at lowe levels in roots, flowers and siliques.</text>
</comment>
<comment type="induction">
    <text evidence="2">By abscisic acid (ABA), salt and osmotic stress. Not induced by anoxia.</text>
</comment>
<comment type="similarity">
    <text evidence="3">Belongs to the TPP enzyme family.</text>
</comment>
<evidence type="ECO:0000250" key="1"/>
<evidence type="ECO:0000269" key="2">
    <source>
    </source>
</evidence>
<evidence type="ECO:0000305" key="3"/>
<feature type="chain" id="PRO_0000422315" description="Pyruvate decarboxylase 4">
    <location>
        <begin position="1"/>
        <end position="603"/>
    </location>
</feature>
<feature type="region of interest" description="Thiamine pyrophosphate binding" evidence="1">
    <location>
        <begin position="430"/>
        <end position="512"/>
    </location>
</feature>
<feature type="binding site" evidence="1">
    <location>
        <position position="65"/>
    </location>
    <ligand>
        <name>substrate</name>
    </ligand>
</feature>
<feature type="binding site" evidence="1">
    <location>
        <position position="152"/>
    </location>
    <ligand>
        <name>substrate</name>
    </ligand>
</feature>
<feature type="binding site" evidence="1">
    <location>
        <position position="480"/>
    </location>
    <ligand>
        <name>Mg(2+)</name>
        <dbReference type="ChEBI" id="CHEBI:18420"/>
    </ligand>
</feature>
<feature type="binding site" evidence="1">
    <location>
        <position position="507"/>
    </location>
    <ligand>
        <name>Mg(2+)</name>
        <dbReference type="ChEBI" id="CHEBI:18420"/>
    </ligand>
</feature>
<feature type="binding site" evidence="1">
    <location>
        <position position="509"/>
    </location>
    <ligand>
        <name>Mg(2+)</name>
        <dbReference type="ChEBI" id="CHEBI:18420"/>
    </ligand>
</feature>
<feature type="binding site" evidence="1">
    <location>
        <position position="513"/>
    </location>
    <ligand>
        <name>substrate</name>
    </ligand>
</feature>
<feature type="sequence conflict" description="In Ref. 3; AAO42252." evidence="3" ref="3">
    <original>I</original>
    <variation>T</variation>
    <location>
        <position position="512"/>
    </location>
</feature>
<gene>
    <name type="primary">PDC4</name>
    <name type="ordered locus">At5g01320</name>
    <name type="ORF">T10O8.30</name>
</gene>
<reference key="1">
    <citation type="journal article" date="2000" name="Nature">
        <title>Sequence and analysis of chromosome 5 of the plant Arabidopsis thaliana.</title>
        <authorList>
            <person name="Tabata S."/>
            <person name="Kaneko T."/>
            <person name="Nakamura Y."/>
            <person name="Kotani H."/>
            <person name="Kato T."/>
            <person name="Asamizu E."/>
            <person name="Miyajima N."/>
            <person name="Sasamoto S."/>
            <person name="Kimura T."/>
            <person name="Hosouchi T."/>
            <person name="Kawashima K."/>
            <person name="Kohara M."/>
            <person name="Matsumoto M."/>
            <person name="Matsuno A."/>
            <person name="Muraki A."/>
            <person name="Nakayama S."/>
            <person name="Nakazaki N."/>
            <person name="Naruo K."/>
            <person name="Okumura S."/>
            <person name="Shinpo S."/>
            <person name="Takeuchi C."/>
            <person name="Wada T."/>
            <person name="Watanabe A."/>
            <person name="Yamada M."/>
            <person name="Yasuda M."/>
            <person name="Sato S."/>
            <person name="de la Bastide M."/>
            <person name="Huang E."/>
            <person name="Spiegel L."/>
            <person name="Gnoj L."/>
            <person name="O'Shaughnessy A."/>
            <person name="Preston R."/>
            <person name="Habermann K."/>
            <person name="Murray J."/>
            <person name="Johnson D."/>
            <person name="Rohlfing T."/>
            <person name="Nelson J."/>
            <person name="Stoneking T."/>
            <person name="Pepin K."/>
            <person name="Spieth J."/>
            <person name="Sekhon M."/>
            <person name="Armstrong J."/>
            <person name="Becker M."/>
            <person name="Belter E."/>
            <person name="Cordum H."/>
            <person name="Cordes M."/>
            <person name="Courtney L."/>
            <person name="Courtney W."/>
            <person name="Dante M."/>
            <person name="Du H."/>
            <person name="Edwards J."/>
            <person name="Fryman J."/>
            <person name="Haakensen B."/>
            <person name="Lamar E."/>
            <person name="Latreille P."/>
            <person name="Leonard S."/>
            <person name="Meyer R."/>
            <person name="Mulvaney E."/>
            <person name="Ozersky P."/>
            <person name="Riley A."/>
            <person name="Strowmatt C."/>
            <person name="Wagner-McPherson C."/>
            <person name="Wollam A."/>
            <person name="Yoakum M."/>
            <person name="Bell M."/>
            <person name="Dedhia N."/>
            <person name="Parnell L."/>
            <person name="Shah R."/>
            <person name="Rodriguez M."/>
            <person name="Hoon See L."/>
            <person name="Vil D."/>
            <person name="Baker J."/>
            <person name="Kirchoff K."/>
            <person name="Toth K."/>
            <person name="King L."/>
            <person name="Bahret A."/>
            <person name="Miller B."/>
            <person name="Marra M.A."/>
            <person name="Martienssen R."/>
            <person name="McCombie W.R."/>
            <person name="Wilson R.K."/>
            <person name="Murphy G."/>
            <person name="Bancroft I."/>
            <person name="Volckaert G."/>
            <person name="Wambutt R."/>
            <person name="Duesterhoeft A."/>
            <person name="Stiekema W."/>
            <person name="Pohl T."/>
            <person name="Entian K.-D."/>
            <person name="Terryn N."/>
            <person name="Hartley N."/>
            <person name="Bent E."/>
            <person name="Johnson S."/>
            <person name="Langham S.-A."/>
            <person name="McCullagh B."/>
            <person name="Robben J."/>
            <person name="Grymonprez B."/>
            <person name="Zimmermann W."/>
            <person name="Ramsperger U."/>
            <person name="Wedler H."/>
            <person name="Balke K."/>
            <person name="Wedler E."/>
            <person name="Peters S."/>
            <person name="van Staveren M."/>
            <person name="Dirkse W."/>
            <person name="Mooijman P."/>
            <person name="Klein Lankhorst R."/>
            <person name="Weitzenegger T."/>
            <person name="Bothe G."/>
            <person name="Rose M."/>
            <person name="Hauf J."/>
            <person name="Berneiser S."/>
            <person name="Hempel S."/>
            <person name="Feldpausch M."/>
            <person name="Lamberth S."/>
            <person name="Villarroel R."/>
            <person name="Gielen J."/>
            <person name="Ardiles W."/>
            <person name="Bents O."/>
            <person name="Lemcke K."/>
            <person name="Kolesov G."/>
            <person name="Mayer K.F.X."/>
            <person name="Rudd S."/>
            <person name="Schoof H."/>
            <person name="Schueller C."/>
            <person name="Zaccaria P."/>
            <person name="Mewes H.-W."/>
            <person name="Bevan M."/>
            <person name="Fransz P.F."/>
        </authorList>
    </citation>
    <scope>NUCLEOTIDE SEQUENCE [LARGE SCALE GENOMIC DNA]</scope>
    <source>
        <strain>cv. Columbia</strain>
    </source>
</reference>
<reference key="2">
    <citation type="journal article" date="2017" name="Plant J.">
        <title>Araport11: a complete reannotation of the Arabidopsis thaliana reference genome.</title>
        <authorList>
            <person name="Cheng C.Y."/>
            <person name="Krishnakumar V."/>
            <person name="Chan A.P."/>
            <person name="Thibaud-Nissen F."/>
            <person name="Schobel S."/>
            <person name="Town C.D."/>
        </authorList>
    </citation>
    <scope>GENOME REANNOTATION</scope>
    <source>
        <strain>cv. Columbia</strain>
    </source>
</reference>
<reference key="3">
    <citation type="journal article" date="2003" name="Science">
        <title>Empirical analysis of transcriptional activity in the Arabidopsis genome.</title>
        <authorList>
            <person name="Yamada K."/>
            <person name="Lim J."/>
            <person name="Dale J.M."/>
            <person name="Chen H."/>
            <person name="Shinn P."/>
            <person name="Palm C.J."/>
            <person name="Southwick A.M."/>
            <person name="Wu H.C."/>
            <person name="Kim C.J."/>
            <person name="Nguyen M."/>
            <person name="Pham P.K."/>
            <person name="Cheuk R.F."/>
            <person name="Karlin-Newmann G."/>
            <person name="Liu S.X."/>
            <person name="Lam B."/>
            <person name="Sakano H."/>
            <person name="Wu T."/>
            <person name="Yu G."/>
            <person name="Miranda M."/>
            <person name="Quach H.L."/>
            <person name="Tripp M."/>
            <person name="Chang C.H."/>
            <person name="Lee J.M."/>
            <person name="Toriumi M.J."/>
            <person name="Chan M.M."/>
            <person name="Tang C.C."/>
            <person name="Onodera C.S."/>
            <person name="Deng J.M."/>
            <person name="Akiyama K."/>
            <person name="Ansari Y."/>
            <person name="Arakawa T."/>
            <person name="Banh J."/>
            <person name="Banno F."/>
            <person name="Bowser L."/>
            <person name="Brooks S.Y."/>
            <person name="Carninci P."/>
            <person name="Chao Q."/>
            <person name="Choy N."/>
            <person name="Enju A."/>
            <person name="Goldsmith A.D."/>
            <person name="Gurjal M."/>
            <person name="Hansen N.F."/>
            <person name="Hayashizaki Y."/>
            <person name="Johnson-Hopson C."/>
            <person name="Hsuan V.W."/>
            <person name="Iida K."/>
            <person name="Karnes M."/>
            <person name="Khan S."/>
            <person name="Koesema E."/>
            <person name="Ishida J."/>
            <person name="Jiang P.X."/>
            <person name="Jones T."/>
            <person name="Kawai J."/>
            <person name="Kamiya A."/>
            <person name="Meyers C."/>
            <person name="Nakajima M."/>
            <person name="Narusaka M."/>
            <person name="Seki M."/>
            <person name="Sakurai T."/>
            <person name="Satou M."/>
            <person name="Tamse R."/>
            <person name="Vaysberg M."/>
            <person name="Wallender E.K."/>
            <person name="Wong C."/>
            <person name="Yamamura Y."/>
            <person name="Yuan S."/>
            <person name="Shinozaki K."/>
            <person name="Davis R.W."/>
            <person name="Theologis A."/>
            <person name="Ecker J.R."/>
        </authorList>
    </citation>
    <scope>NUCLEOTIDE SEQUENCE [LARGE SCALE MRNA] OF 40-603</scope>
    <source>
        <strain>cv. Columbia</strain>
    </source>
</reference>
<reference key="4">
    <citation type="journal article" date="2003" name="Plant Physiol.">
        <title>The pyruvate decarboxylase1 gene of Arabidopsis is required during anoxia but not other environmental stresses.</title>
        <authorList>
            <person name="Kuersteiner O."/>
            <person name="Dupuis I."/>
            <person name="Kuhlemeier C."/>
        </authorList>
    </citation>
    <scope>TISSUE SPECIFICITY</scope>
    <scope>INDUCTION</scope>
</reference>
<organism>
    <name type="scientific">Arabidopsis thaliana</name>
    <name type="common">Mouse-ear cress</name>
    <dbReference type="NCBI Taxonomy" id="3702"/>
    <lineage>
        <taxon>Eukaryota</taxon>
        <taxon>Viridiplantae</taxon>
        <taxon>Streptophyta</taxon>
        <taxon>Embryophyta</taxon>
        <taxon>Tracheophyta</taxon>
        <taxon>Spermatophyta</taxon>
        <taxon>Magnoliopsida</taxon>
        <taxon>eudicotyledons</taxon>
        <taxon>Gunneridae</taxon>
        <taxon>Pentapetalae</taxon>
        <taxon>rosids</taxon>
        <taxon>malvids</taxon>
        <taxon>Brassicales</taxon>
        <taxon>Brassicaceae</taxon>
        <taxon>Camelineae</taxon>
        <taxon>Arabidopsis</taxon>
    </lineage>
</organism>
<proteinExistence type="evidence at transcript level"/>
<accession>Q9M040</accession>
<accession>Q84W45</accession>
<dbReference type="EC" id="4.1.1.1"/>
<dbReference type="EMBL" id="AL161746">
    <property type="protein sequence ID" value="CAB81915.1"/>
    <property type="molecule type" value="Genomic_DNA"/>
</dbReference>
<dbReference type="EMBL" id="CP002688">
    <property type="protein sequence ID" value="AED90327.1"/>
    <property type="molecule type" value="Genomic_DNA"/>
</dbReference>
<dbReference type="EMBL" id="BT004248">
    <property type="protein sequence ID" value="AAO42252.1"/>
    <property type="molecule type" value="mRNA"/>
</dbReference>
<dbReference type="PIR" id="T48154">
    <property type="entry name" value="T48154"/>
</dbReference>
<dbReference type="RefSeq" id="NP_195752.1">
    <property type="nucleotide sequence ID" value="NM_120210.3"/>
</dbReference>
<dbReference type="SMR" id="Q9M040"/>
<dbReference type="BioGRID" id="16145">
    <property type="interactions" value="7"/>
</dbReference>
<dbReference type="FunCoup" id="Q9M040">
    <property type="interactions" value="151"/>
</dbReference>
<dbReference type="STRING" id="3702.Q9M040"/>
<dbReference type="PaxDb" id="3702-AT5G01320.1"/>
<dbReference type="ProteomicsDB" id="236379"/>
<dbReference type="EnsemblPlants" id="AT5G01320.1">
    <property type="protein sequence ID" value="AT5G01320.1"/>
    <property type="gene ID" value="AT5G01320"/>
</dbReference>
<dbReference type="GeneID" id="830867"/>
<dbReference type="Gramene" id="AT5G01320.1">
    <property type="protein sequence ID" value="AT5G01320.1"/>
    <property type="gene ID" value="AT5G01320"/>
</dbReference>
<dbReference type="KEGG" id="ath:AT5G01320"/>
<dbReference type="Araport" id="AT5G01320"/>
<dbReference type="TAIR" id="AT5G01320"/>
<dbReference type="eggNOG" id="KOG1184">
    <property type="taxonomic scope" value="Eukaryota"/>
</dbReference>
<dbReference type="HOGENOM" id="CLU_013748_0_2_1"/>
<dbReference type="InParanoid" id="Q9M040"/>
<dbReference type="OMA" id="EARFPNN"/>
<dbReference type="PhylomeDB" id="Q9M040"/>
<dbReference type="BioCyc" id="ARA:AT5G01320-MONOMER"/>
<dbReference type="BRENDA" id="4.1.1.1">
    <property type="organism ID" value="399"/>
</dbReference>
<dbReference type="PRO" id="PR:Q9M040"/>
<dbReference type="Proteomes" id="UP000006548">
    <property type="component" value="Chromosome 5"/>
</dbReference>
<dbReference type="ExpressionAtlas" id="Q9M040">
    <property type="expression patterns" value="baseline and differential"/>
</dbReference>
<dbReference type="GO" id="GO:0000287">
    <property type="term" value="F:magnesium ion binding"/>
    <property type="evidence" value="ECO:0007669"/>
    <property type="project" value="InterPro"/>
</dbReference>
<dbReference type="GO" id="GO:0004737">
    <property type="term" value="F:pyruvate decarboxylase activity"/>
    <property type="evidence" value="ECO:0007669"/>
    <property type="project" value="UniProtKB-EC"/>
</dbReference>
<dbReference type="GO" id="GO:0030976">
    <property type="term" value="F:thiamine pyrophosphate binding"/>
    <property type="evidence" value="ECO:0007669"/>
    <property type="project" value="InterPro"/>
</dbReference>
<dbReference type="CDD" id="cd02005">
    <property type="entry name" value="TPP_PDC_IPDC"/>
    <property type="match status" value="1"/>
</dbReference>
<dbReference type="CDD" id="cd07038">
    <property type="entry name" value="TPP_PYR_PDC_IPDC_like"/>
    <property type="match status" value="1"/>
</dbReference>
<dbReference type="FunFam" id="3.40.50.1220:FF:000009">
    <property type="entry name" value="Pyruvate decarboxylase 1"/>
    <property type="match status" value="1"/>
</dbReference>
<dbReference type="FunFam" id="3.40.50.970:FF:000021">
    <property type="entry name" value="Pyruvate decarboxylase 1"/>
    <property type="match status" value="1"/>
</dbReference>
<dbReference type="FunFam" id="3.40.50.970:FF:000017">
    <property type="entry name" value="pyruvate decarboxylase 1"/>
    <property type="match status" value="1"/>
</dbReference>
<dbReference type="Gene3D" id="3.40.50.970">
    <property type="match status" value="2"/>
</dbReference>
<dbReference type="Gene3D" id="3.40.50.1220">
    <property type="entry name" value="TPP-binding domain"/>
    <property type="match status" value="1"/>
</dbReference>
<dbReference type="InterPro" id="IPR029035">
    <property type="entry name" value="DHS-like_NAD/FAD-binding_dom"/>
</dbReference>
<dbReference type="InterPro" id="IPR012110">
    <property type="entry name" value="PDC/IPDC-like"/>
</dbReference>
<dbReference type="InterPro" id="IPR029061">
    <property type="entry name" value="THDP-binding"/>
</dbReference>
<dbReference type="InterPro" id="IPR012000">
    <property type="entry name" value="Thiamin_PyroP_enz_cen_dom"/>
</dbReference>
<dbReference type="InterPro" id="IPR012001">
    <property type="entry name" value="Thiamin_PyroP_enz_TPP-bd_dom"/>
</dbReference>
<dbReference type="InterPro" id="IPR000399">
    <property type="entry name" value="TPP-bd_CS"/>
</dbReference>
<dbReference type="InterPro" id="IPR011766">
    <property type="entry name" value="TPP_enzyme_TPP-bd"/>
</dbReference>
<dbReference type="InterPro" id="IPR047214">
    <property type="entry name" value="TPP_PDC_IPDC"/>
</dbReference>
<dbReference type="InterPro" id="IPR047213">
    <property type="entry name" value="TPP_PYR_PDC_IPDC-like"/>
</dbReference>
<dbReference type="PANTHER" id="PTHR43452">
    <property type="entry name" value="PYRUVATE DECARBOXYLASE"/>
    <property type="match status" value="1"/>
</dbReference>
<dbReference type="PANTHER" id="PTHR43452:SF38">
    <property type="entry name" value="PYRUVATE DECARBOXYLASE 3-RELATED"/>
    <property type="match status" value="1"/>
</dbReference>
<dbReference type="Pfam" id="PF02775">
    <property type="entry name" value="TPP_enzyme_C"/>
    <property type="match status" value="1"/>
</dbReference>
<dbReference type="Pfam" id="PF00205">
    <property type="entry name" value="TPP_enzyme_M"/>
    <property type="match status" value="1"/>
</dbReference>
<dbReference type="Pfam" id="PF02776">
    <property type="entry name" value="TPP_enzyme_N"/>
    <property type="match status" value="1"/>
</dbReference>
<dbReference type="PIRSF" id="PIRSF036565">
    <property type="entry name" value="Pyruvt_ip_decrb"/>
    <property type="match status" value="1"/>
</dbReference>
<dbReference type="SUPFAM" id="SSF52467">
    <property type="entry name" value="DHS-like NAD/FAD-binding domain"/>
    <property type="match status" value="1"/>
</dbReference>
<dbReference type="SUPFAM" id="SSF52518">
    <property type="entry name" value="Thiamin diphosphate-binding fold (THDP-binding)"/>
    <property type="match status" value="2"/>
</dbReference>
<dbReference type="PROSITE" id="PS00187">
    <property type="entry name" value="TPP_ENZYMES"/>
    <property type="match status" value="1"/>
</dbReference>
<sequence length="603" mass="65465">MDTKIGAIDTCKPTTGDIGSPPSNAVATIQDSAPITTTSESTLGRHLSRRLVQAGVTDVFSVPGDFNLTLLDHLIAEPELNNIGCCNELNAGYAADGYARSRGVGACVVTFTVGGLSVLNAIAGAYSENLPVICIVGGPNSNDFGTNRILHHTIGLPDFSQELRCFQTVTCYQAVVNNLEDAHEQIDKAIATALKESKPVYISISCNLAATPHPTFARDPVPFDLTPRMSNTMGLEAAVEATLEFLNKAVKPVMVGGPKLRVAKASEAFLELADASGYPLAVMPSTKGLVPENHPHFIGTYWGAVSTPFCSEIVESADAYIFAGPIFNDYSSVGYSLLLKKEKAIIVHPDRVVVANGPTFGCVLMSDFFRELAKRVKRNETAYENYERIFVPEGKPLKCKPGEPLRVNAMFQHIQKMLSSETAVIAETGDSWFNCQKLKLPKGCGYEFQMQYGSIGWSVGATLGYAQATPEKRVLSFIGDGSFQVTAQDISTMIRNGQKAIIFLINNGGYTIEVEIHDGPYNVIKNWNYTGLVDAIHNGEGKCWTTKVRYEEELVEAIKTATTEKKDSLCFIEVIVHKDDTSKELLEWGSRVSAANGRPPNPQ</sequence>